<gene>
    <name evidence="2" type="primary">fabA</name>
    <name type="ordered locus">STY1088</name>
    <name type="ordered locus">t1853</name>
</gene>
<dbReference type="EC" id="4.2.1.59" evidence="2"/>
<dbReference type="EC" id="5.3.3.14" evidence="2"/>
<dbReference type="EMBL" id="AL513382">
    <property type="protein sequence ID" value="CAD08193.1"/>
    <property type="molecule type" value="Genomic_DNA"/>
</dbReference>
<dbReference type="EMBL" id="AE014613">
    <property type="protein sequence ID" value="AAO69471.1"/>
    <property type="molecule type" value="Genomic_DNA"/>
</dbReference>
<dbReference type="RefSeq" id="NP_455565.1">
    <property type="nucleotide sequence ID" value="NC_003198.1"/>
</dbReference>
<dbReference type="RefSeq" id="WP_000227928.1">
    <property type="nucleotide sequence ID" value="NZ_WSUR01000013.1"/>
</dbReference>
<dbReference type="SMR" id="P64106"/>
<dbReference type="STRING" id="220341.gene:17585071"/>
<dbReference type="KEGG" id="stt:t1853"/>
<dbReference type="KEGG" id="sty:STY1088"/>
<dbReference type="PATRIC" id="fig|220341.7.peg.1096"/>
<dbReference type="eggNOG" id="COG0764">
    <property type="taxonomic scope" value="Bacteria"/>
</dbReference>
<dbReference type="HOGENOM" id="CLU_097925_0_0_6"/>
<dbReference type="OMA" id="FDCHFKG"/>
<dbReference type="OrthoDB" id="9786735at2"/>
<dbReference type="UniPathway" id="UPA00094"/>
<dbReference type="Proteomes" id="UP000000541">
    <property type="component" value="Chromosome"/>
</dbReference>
<dbReference type="Proteomes" id="UP000002670">
    <property type="component" value="Chromosome"/>
</dbReference>
<dbReference type="GO" id="GO:0005737">
    <property type="term" value="C:cytoplasm"/>
    <property type="evidence" value="ECO:0007669"/>
    <property type="project" value="UniProtKB-SubCell"/>
</dbReference>
<dbReference type="GO" id="GO:0019171">
    <property type="term" value="F:(3R)-hydroxyacyl-[acyl-carrier-protein] dehydratase activity"/>
    <property type="evidence" value="ECO:0007669"/>
    <property type="project" value="UniProtKB-UniRule"/>
</dbReference>
<dbReference type="GO" id="GO:0034017">
    <property type="term" value="F:trans-2-decenoyl-acyl-carrier-protein isomerase activity"/>
    <property type="evidence" value="ECO:0007669"/>
    <property type="project" value="UniProtKB-UniRule"/>
</dbReference>
<dbReference type="GO" id="GO:0006636">
    <property type="term" value="P:unsaturated fatty acid biosynthetic process"/>
    <property type="evidence" value="ECO:0007669"/>
    <property type="project" value="UniProtKB-UniRule"/>
</dbReference>
<dbReference type="CDD" id="cd01287">
    <property type="entry name" value="FabA"/>
    <property type="match status" value="1"/>
</dbReference>
<dbReference type="FunFam" id="3.10.129.10:FF:000003">
    <property type="entry name" value="3-hydroxydecanoyl-[acyl-carrier-protein] dehydratase"/>
    <property type="match status" value="1"/>
</dbReference>
<dbReference type="Gene3D" id="3.10.129.10">
    <property type="entry name" value="Hotdog Thioesterase"/>
    <property type="match status" value="1"/>
</dbReference>
<dbReference type="HAMAP" id="MF_00405">
    <property type="entry name" value="FabA"/>
    <property type="match status" value="1"/>
</dbReference>
<dbReference type="InterPro" id="IPR010083">
    <property type="entry name" value="FabA"/>
</dbReference>
<dbReference type="InterPro" id="IPR013114">
    <property type="entry name" value="FabA_FabZ"/>
</dbReference>
<dbReference type="InterPro" id="IPR029069">
    <property type="entry name" value="HotDog_dom_sf"/>
</dbReference>
<dbReference type="NCBIfam" id="TIGR01749">
    <property type="entry name" value="fabA"/>
    <property type="match status" value="1"/>
</dbReference>
<dbReference type="NCBIfam" id="NF003509">
    <property type="entry name" value="PRK05174.1"/>
    <property type="match status" value="1"/>
</dbReference>
<dbReference type="PANTHER" id="PTHR30272">
    <property type="entry name" value="3-HYDROXYACYL-[ACYL-CARRIER-PROTEIN] DEHYDRATASE"/>
    <property type="match status" value="1"/>
</dbReference>
<dbReference type="PANTHER" id="PTHR30272:SF8">
    <property type="entry name" value="3-HYDROXYDECANOYL-[ACYL-CARRIER-PROTEIN] DEHYDRATASE"/>
    <property type="match status" value="1"/>
</dbReference>
<dbReference type="Pfam" id="PF07977">
    <property type="entry name" value="FabA"/>
    <property type="match status" value="1"/>
</dbReference>
<dbReference type="SUPFAM" id="SSF54637">
    <property type="entry name" value="Thioesterase/thiol ester dehydrase-isomerase"/>
    <property type="match status" value="1"/>
</dbReference>
<name>FABA_SALTI</name>
<keyword id="KW-0963">Cytoplasm</keyword>
<keyword id="KW-0275">Fatty acid biosynthesis</keyword>
<keyword id="KW-0276">Fatty acid metabolism</keyword>
<keyword id="KW-0413">Isomerase</keyword>
<keyword id="KW-0444">Lipid biosynthesis</keyword>
<keyword id="KW-0443">Lipid metabolism</keyword>
<keyword id="KW-0456">Lyase</keyword>
<organism>
    <name type="scientific">Salmonella typhi</name>
    <dbReference type="NCBI Taxonomy" id="90370"/>
    <lineage>
        <taxon>Bacteria</taxon>
        <taxon>Pseudomonadati</taxon>
        <taxon>Pseudomonadota</taxon>
        <taxon>Gammaproteobacteria</taxon>
        <taxon>Enterobacterales</taxon>
        <taxon>Enterobacteriaceae</taxon>
        <taxon>Salmonella</taxon>
    </lineage>
</organism>
<reference key="1">
    <citation type="journal article" date="2001" name="Nature">
        <title>Complete genome sequence of a multiple drug resistant Salmonella enterica serovar Typhi CT18.</title>
        <authorList>
            <person name="Parkhill J."/>
            <person name="Dougan G."/>
            <person name="James K.D."/>
            <person name="Thomson N.R."/>
            <person name="Pickard D."/>
            <person name="Wain J."/>
            <person name="Churcher C.M."/>
            <person name="Mungall K.L."/>
            <person name="Bentley S.D."/>
            <person name="Holden M.T.G."/>
            <person name="Sebaihia M."/>
            <person name="Baker S."/>
            <person name="Basham D."/>
            <person name="Brooks K."/>
            <person name="Chillingworth T."/>
            <person name="Connerton P."/>
            <person name="Cronin A."/>
            <person name="Davis P."/>
            <person name="Davies R.M."/>
            <person name="Dowd L."/>
            <person name="White N."/>
            <person name="Farrar J."/>
            <person name="Feltwell T."/>
            <person name="Hamlin N."/>
            <person name="Haque A."/>
            <person name="Hien T.T."/>
            <person name="Holroyd S."/>
            <person name="Jagels K."/>
            <person name="Krogh A."/>
            <person name="Larsen T.S."/>
            <person name="Leather S."/>
            <person name="Moule S."/>
            <person name="O'Gaora P."/>
            <person name="Parry C."/>
            <person name="Quail M.A."/>
            <person name="Rutherford K.M."/>
            <person name="Simmonds M."/>
            <person name="Skelton J."/>
            <person name="Stevens K."/>
            <person name="Whitehead S."/>
            <person name="Barrell B.G."/>
        </authorList>
    </citation>
    <scope>NUCLEOTIDE SEQUENCE [LARGE SCALE GENOMIC DNA]</scope>
    <source>
        <strain>CT18</strain>
    </source>
</reference>
<reference key="2">
    <citation type="journal article" date="2003" name="J. Bacteriol.">
        <title>Comparative genomics of Salmonella enterica serovar Typhi strains Ty2 and CT18.</title>
        <authorList>
            <person name="Deng W."/>
            <person name="Liou S.-R."/>
            <person name="Plunkett G. III"/>
            <person name="Mayhew G.F."/>
            <person name="Rose D.J."/>
            <person name="Burland V."/>
            <person name="Kodoyianni V."/>
            <person name="Schwartz D.C."/>
            <person name="Blattner F.R."/>
        </authorList>
    </citation>
    <scope>NUCLEOTIDE SEQUENCE [LARGE SCALE GENOMIC DNA]</scope>
    <source>
        <strain>ATCC 700931 / Ty2</strain>
    </source>
</reference>
<accession>P64106</accession>
<accession>Q8XEY3</accession>
<protein>
    <recommendedName>
        <fullName evidence="2">3-hydroxydecanoyl-[acyl-carrier-protein] dehydratase</fullName>
        <ecNumber evidence="2">4.2.1.59</ecNumber>
    </recommendedName>
    <alternativeName>
        <fullName evidence="2">3-hydroxyacyl-[acyl-carrier-protein] dehydratase FabA</fullName>
    </alternativeName>
    <alternativeName>
        <fullName evidence="2">Beta-hydroxydecanoyl thioester dehydrase</fullName>
    </alternativeName>
    <alternativeName>
        <fullName evidence="2">Trans-2-decenoyl-[acyl-carrier-protein] isomerase</fullName>
        <ecNumber evidence="2">5.3.3.14</ecNumber>
    </alternativeName>
</protein>
<sequence length="172" mass="19047">MVDKRESYTKEDLLASGRGELFGAKGPQLPAPNMLMMDRVVKMTETGGNFDKGYVEAELDINPDLWFFGCHFIGDPVMPGCLGLDAMWQLVGFYLGWLGGEGKGRALGVGEVKFTGQVLPTARKVTYRIHFKRIVNRRLIMGLADGEVLVDGRLIYTAHDLKVGLFQDTSAF</sequence>
<proteinExistence type="inferred from homology"/>
<feature type="initiator methionine" description="Removed" evidence="1">
    <location>
        <position position="1"/>
    </location>
</feature>
<feature type="chain" id="PRO_0000091613" description="3-hydroxydecanoyl-[acyl-carrier-protein] dehydratase">
    <location>
        <begin position="2"/>
        <end position="172"/>
    </location>
</feature>
<feature type="active site" evidence="2">
    <location>
        <position position="71"/>
    </location>
</feature>
<evidence type="ECO:0000250" key="1"/>
<evidence type="ECO:0000255" key="2">
    <source>
        <dbReference type="HAMAP-Rule" id="MF_00405"/>
    </source>
</evidence>
<comment type="function">
    <text evidence="2">Necessary for the introduction of cis unsaturation into fatty acids. Catalyzes the dehydration of (3R)-3-hydroxydecanoyl-ACP to E-(2)-decenoyl-ACP and then its isomerization to Z-(3)-decenoyl-ACP. Can catalyze the dehydratase reaction for beta-hydroxyacyl-ACPs with saturated chain lengths up to 16:0, being most active on intermediate chain length.</text>
</comment>
<comment type="catalytic activity">
    <reaction evidence="2">
        <text>a (3R)-hydroxyacyl-[ACP] = a (2E)-enoyl-[ACP] + H2O</text>
        <dbReference type="Rhea" id="RHEA:13097"/>
        <dbReference type="Rhea" id="RHEA-COMP:9925"/>
        <dbReference type="Rhea" id="RHEA-COMP:9945"/>
        <dbReference type="ChEBI" id="CHEBI:15377"/>
        <dbReference type="ChEBI" id="CHEBI:78784"/>
        <dbReference type="ChEBI" id="CHEBI:78827"/>
        <dbReference type="EC" id="4.2.1.59"/>
    </reaction>
</comment>
<comment type="catalytic activity">
    <reaction evidence="2">
        <text>(3R)-hydroxydecanoyl-[ACP] = (2E)-decenoyl-[ACP] + H2O</text>
        <dbReference type="Rhea" id="RHEA:41860"/>
        <dbReference type="Rhea" id="RHEA-COMP:9638"/>
        <dbReference type="Rhea" id="RHEA-COMP:9639"/>
        <dbReference type="ChEBI" id="CHEBI:15377"/>
        <dbReference type="ChEBI" id="CHEBI:78466"/>
        <dbReference type="ChEBI" id="CHEBI:78467"/>
    </reaction>
</comment>
<comment type="catalytic activity">
    <reaction evidence="2">
        <text>(2E)-decenoyl-[ACP] = (3Z)-decenoyl-[ACP]</text>
        <dbReference type="Rhea" id="RHEA:23568"/>
        <dbReference type="Rhea" id="RHEA-COMP:9639"/>
        <dbReference type="Rhea" id="RHEA-COMP:9927"/>
        <dbReference type="ChEBI" id="CHEBI:78467"/>
        <dbReference type="ChEBI" id="CHEBI:78798"/>
        <dbReference type="EC" id="5.3.3.14"/>
    </reaction>
</comment>
<comment type="pathway">
    <text evidence="2">Lipid metabolism; fatty acid biosynthesis.</text>
</comment>
<comment type="subunit">
    <text evidence="2">Homodimer.</text>
</comment>
<comment type="subcellular location">
    <subcellularLocation>
        <location evidence="2">Cytoplasm</location>
    </subcellularLocation>
</comment>
<comment type="similarity">
    <text evidence="2">Belongs to the thioester dehydratase family. FabA subfamily.</text>
</comment>